<feature type="chain" id="PRO_1000142372" description="Large ribosomal subunit protein uL5">
    <location>
        <begin position="1"/>
        <end position="196"/>
    </location>
</feature>
<evidence type="ECO:0000255" key="1">
    <source>
        <dbReference type="HAMAP-Rule" id="MF_01333"/>
    </source>
</evidence>
<evidence type="ECO:0000305" key="2"/>
<organism>
    <name type="scientific">Chlorobium phaeobacteroides (strain BS1)</name>
    <dbReference type="NCBI Taxonomy" id="331678"/>
    <lineage>
        <taxon>Bacteria</taxon>
        <taxon>Pseudomonadati</taxon>
        <taxon>Chlorobiota</taxon>
        <taxon>Chlorobiia</taxon>
        <taxon>Chlorobiales</taxon>
        <taxon>Chlorobiaceae</taxon>
        <taxon>Chlorobium/Pelodictyon group</taxon>
        <taxon>Chlorobium</taxon>
    </lineage>
</organism>
<accession>B3EP49</accession>
<gene>
    <name evidence="1" type="primary">rplE</name>
    <name type="ordered locus">Cphamn1_2284</name>
</gene>
<dbReference type="EMBL" id="CP001101">
    <property type="protein sequence ID" value="ACE05188.1"/>
    <property type="molecule type" value="Genomic_DNA"/>
</dbReference>
<dbReference type="SMR" id="B3EP49"/>
<dbReference type="STRING" id="331678.Cphamn1_2284"/>
<dbReference type="KEGG" id="cpb:Cphamn1_2284"/>
<dbReference type="eggNOG" id="COG0094">
    <property type="taxonomic scope" value="Bacteria"/>
</dbReference>
<dbReference type="HOGENOM" id="CLU_061015_2_1_10"/>
<dbReference type="OrthoDB" id="9806626at2"/>
<dbReference type="GO" id="GO:1990904">
    <property type="term" value="C:ribonucleoprotein complex"/>
    <property type="evidence" value="ECO:0007669"/>
    <property type="project" value="UniProtKB-KW"/>
</dbReference>
<dbReference type="GO" id="GO:0005840">
    <property type="term" value="C:ribosome"/>
    <property type="evidence" value="ECO:0007669"/>
    <property type="project" value="UniProtKB-KW"/>
</dbReference>
<dbReference type="GO" id="GO:0019843">
    <property type="term" value="F:rRNA binding"/>
    <property type="evidence" value="ECO:0007669"/>
    <property type="project" value="UniProtKB-UniRule"/>
</dbReference>
<dbReference type="GO" id="GO:0003735">
    <property type="term" value="F:structural constituent of ribosome"/>
    <property type="evidence" value="ECO:0007669"/>
    <property type="project" value="InterPro"/>
</dbReference>
<dbReference type="GO" id="GO:0000049">
    <property type="term" value="F:tRNA binding"/>
    <property type="evidence" value="ECO:0007669"/>
    <property type="project" value="UniProtKB-UniRule"/>
</dbReference>
<dbReference type="GO" id="GO:0006412">
    <property type="term" value="P:translation"/>
    <property type="evidence" value="ECO:0007669"/>
    <property type="project" value="UniProtKB-UniRule"/>
</dbReference>
<dbReference type="FunFam" id="3.30.1440.10:FF:000001">
    <property type="entry name" value="50S ribosomal protein L5"/>
    <property type="match status" value="1"/>
</dbReference>
<dbReference type="Gene3D" id="3.30.1440.10">
    <property type="match status" value="1"/>
</dbReference>
<dbReference type="HAMAP" id="MF_01333_B">
    <property type="entry name" value="Ribosomal_uL5_B"/>
    <property type="match status" value="1"/>
</dbReference>
<dbReference type="InterPro" id="IPR002132">
    <property type="entry name" value="Ribosomal_uL5"/>
</dbReference>
<dbReference type="InterPro" id="IPR020930">
    <property type="entry name" value="Ribosomal_uL5_bac-type"/>
</dbReference>
<dbReference type="InterPro" id="IPR031309">
    <property type="entry name" value="Ribosomal_uL5_C"/>
</dbReference>
<dbReference type="InterPro" id="IPR022803">
    <property type="entry name" value="Ribosomal_uL5_dom_sf"/>
</dbReference>
<dbReference type="InterPro" id="IPR031310">
    <property type="entry name" value="Ribosomal_uL5_N"/>
</dbReference>
<dbReference type="NCBIfam" id="NF000585">
    <property type="entry name" value="PRK00010.1"/>
    <property type="match status" value="1"/>
</dbReference>
<dbReference type="PANTHER" id="PTHR11994">
    <property type="entry name" value="60S RIBOSOMAL PROTEIN L11-RELATED"/>
    <property type="match status" value="1"/>
</dbReference>
<dbReference type="Pfam" id="PF00281">
    <property type="entry name" value="Ribosomal_L5"/>
    <property type="match status" value="1"/>
</dbReference>
<dbReference type="Pfam" id="PF00673">
    <property type="entry name" value="Ribosomal_L5_C"/>
    <property type="match status" value="1"/>
</dbReference>
<dbReference type="PIRSF" id="PIRSF002161">
    <property type="entry name" value="Ribosomal_L5"/>
    <property type="match status" value="1"/>
</dbReference>
<dbReference type="SUPFAM" id="SSF55282">
    <property type="entry name" value="RL5-like"/>
    <property type="match status" value="1"/>
</dbReference>
<comment type="function">
    <text evidence="1">This is one of the proteins that bind and probably mediate the attachment of the 5S RNA into the large ribosomal subunit, where it forms part of the central protuberance. In the 70S ribosome it contacts protein S13 of the 30S subunit (bridge B1b), connecting the 2 subunits; this bridge is implicated in subunit movement. Contacts the P site tRNA; the 5S rRNA and some of its associated proteins might help stabilize positioning of ribosome-bound tRNAs.</text>
</comment>
<comment type="subunit">
    <text evidence="1">Part of the 50S ribosomal subunit; part of the 5S rRNA/L5/L18/L25 subcomplex. Contacts the 5S rRNA and the P site tRNA. Forms a bridge to the 30S subunit in the 70S ribosome.</text>
</comment>
<comment type="similarity">
    <text evidence="1">Belongs to the universal ribosomal protein uL5 family.</text>
</comment>
<sequence>MAEKKEKVKPTEQQKARLENTYKDKVVPALMERFKYKNIMMVPRLTKISVNIGVGEAAAEPKLLETAIQELSQITGQKPQIRKARKAISNFKLREGQAIGCRVTMRKKYMYEFLERFVTLAVPRIRDFRGLSTTSFDGRGNYSVGVREQIIFPEIDIDKVPRIQGMDISFVTTAKTDEEAFALLSELGMPFRKKNN</sequence>
<protein>
    <recommendedName>
        <fullName evidence="1">Large ribosomal subunit protein uL5</fullName>
    </recommendedName>
    <alternativeName>
        <fullName evidence="2">50S ribosomal protein L5</fullName>
    </alternativeName>
</protein>
<proteinExistence type="inferred from homology"/>
<name>RL5_CHLPB</name>
<reference key="1">
    <citation type="submission" date="2008-06" db="EMBL/GenBank/DDBJ databases">
        <title>Complete sequence of Chlorobium phaeobacteroides BS1.</title>
        <authorList>
            <consortium name="US DOE Joint Genome Institute"/>
            <person name="Lucas S."/>
            <person name="Copeland A."/>
            <person name="Lapidus A."/>
            <person name="Glavina del Rio T."/>
            <person name="Dalin E."/>
            <person name="Tice H."/>
            <person name="Bruce D."/>
            <person name="Goodwin L."/>
            <person name="Pitluck S."/>
            <person name="Schmutz J."/>
            <person name="Larimer F."/>
            <person name="Land M."/>
            <person name="Hauser L."/>
            <person name="Kyrpides N."/>
            <person name="Ovchinnikova G."/>
            <person name="Li T."/>
            <person name="Liu Z."/>
            <person name="Zhao F."/>
            <person name="Overmann J."/>
            <person name="Bryant D.A."/>
            <person name="Richardson P."/>
        </authorList>
    </citation>
    <scope>NUCLEOTIDE SEQUENCE [LARGE SCALE GENOMIC DNA]</scope>
    <source>
        <strain>BS1</strain>
    </source>
</reference>
<keyword id="KW-0687">Ribonucleoprotein</keyword>
<keyword id="KW-0689">Ribosomal protein</keyword>
<keyword id="KW-0694">RNA-binding</keyword>
<keyword id="KW-0699">rRNA-binding</keyword>
<keyword id="KW-0820">tRNA-binding</keyword>